<feature type="chain" id="PRO_0000416773" description="Phenylacetate-coenzyme A ligase">
    <location>
        <begin position="1"/>
        <end position="440"/>
    </location>
</feature>
<organism>
    <name type="scientific">Aromatoleum evansii</name>
    <name type="common">Azoarcus evansii</name>
    <dbReference type="NCBI Taxonomy" id="59406"/>
    <lineage>
        <taxon>Bacteria</taxon>
        <taxon>Pseudomonadati</taxon>
        <taxon>Pseudomonadota</taxon>
        <taxon>Betaproteobacteria</taxon>
        <taxon>Rhodocyclales</taxon>
        <taxon>Rhodocyclaceae</taxon>
        <taxon>Aromatoleum</taxon>
    </lineage>
</organism>
<gene>
    <name type="primary">paaK</name>
    <name type="synonym">pacD</name>
</gene>
<keyword id="KW-0067">ATP-binding</keyword>
<keyword id="KW-0903">Direct protein sequencing</keyword>
<keyword id="KW-0436">Ligase</keyword>
<keyword id="KW-0547">Nucleotide-binding</keyword>
<evidence type="ECO:0000269" key="1">
    <source>
    </source>
</evidence>
<evidence type="ECO:0000269" key="2">
    <source>
    </source>
</evidence>
<evidence type="ECO:0000269" key="3">
    <source>
    </source>
</evidence>
<evidence type="ECO:0000305" key="4"/>
<protein>
    <recommendedName>
        <fullName>Phenylacetate-coenzyme A ligase</fullName>
        <ecNumber>6.2.1.30</ecNumber>
    </recommendedName>
    <alternativeName>
        <fullName>Phenylacetyl-CoA ligase</fullName>
        <shortName>PA-CoA ligase</shortName>
    </alternativeName>
</protein>
<proteinExistence type="evidence at protein level"/>
<dbReference type="EC" id="6.2.1.30"/>
<dbReference type="EMBL" id="AF176259">
    <property type="protein sequence ID" value="AAF26285.1"/>
    <property type="molecule type" value="Genomic_DNA"/>
</dbReference>
<dbReference type="EMBL" id="AJ278756">
    <property type="protein sequence ID" value="CAC10605.1"/>
    <property type="molecule type" value="Genomic_DNA"/>
</dbReference>
<dbReference type="RefSeq" id="WP_169132234.1">
    <property type="nucleotide sequence ID" value="NZ_CAWPLS010000290.1"/>
</dbReference>
<dbReference type="SMR" id="Q9L9C1"/>
<dbReference type="BioCyc" id="MetaCyc:MONOMER-12132"/>
<dbReference type="SABIO-RK" id="Q9L9C1"/>
<dbReference type="UniPathway" id="UPA00930"/>
<dbReference type="GO" id="GO:0005524">
    <property type="term" value="F:ATP binding"/>
    <property type="evidence" value="ECO:0000314"/>
    <property type="project" value="UniProtKB"/>
</dbReference>
<dbReference type="GO" id="GO:0047475">
    <property type="term" value="F:phenylacetate-CoA ligase activity"/>
    <property type="evidence" value="ECO:0000314"/>
    <property type="project" value="UniProtKB"/>
</dbReference>
<dbReference type="GO" id="GO:0010124">
    <property type="term" value="P:phenylacetate catabolic process"/>
    <property type="evidence" value="ECO:0000314"/>
    <property type="project" value="UniProtKB"/>
</dbReference>
<dbReference type="CDD" id="cd05913">
    <property type="entry name" value="PaaK"/>
    <property type="match status" value="1"/>
</dbReference>
<dbReference type="FunFam" id="3.40.50.12780:FF:000016">
    <property type="entry name" value="Phenylacetate-coenzyme A ligase"/>
    <property type="match status" value="1"/>
</dbReference>
<dbReference type="Gene3D" id="3.30.300.30">
    <property type="match status" value="1"/>
</dbReference>
<dbReference type="Gene3D" id="3.40.50.12780">
    <property type="entry name" value="N-terminal domain of ligase-like"/>
    <property type="match status" value="1"/>
</dbReference>
<dbReference type="InterPro" id="IPR051414">
    <property type="entry name" value="Adenylate-forming_Reductase"/>
</dbReference>
<dbReference type="InterPro" id="IPR045851">
    <property type="entry name" value="AMP-bd_C_sf"/>
</dbReference>
<dbReference type="InterPro" id="IPR028154">
    <property type="entry name" value="AMP-dep_Lig_C"/>
</dbReference>
<dbReference type="InterPro" id="IPR000873">
    <property type="entry name" value="AMP-dep_synth/lig_dom"/>
</dbReference>
<dbReference type="InterPro" id="IPR042099">
    <property type="entry name" value="ANL_N_sf"/>
</dbReference>
<dbReference type="InterPro" id="IPR049623">
    <property type="entry name" value="PA_CoA_lig_proteobact_actino"/>
</dbReference>
<dbReference type="InterPro" id="IPR011880">
    <property type="entry name" value="PA_CoA_ligase"/>
</dbReference>
<dbReference type="NCBIfam" id="TIGR02155">
    <property type="entry name" value="PA_CoA_ligase"/>
    <property type="match status" value="1"/>
</dbReference>
<dbReference type="PANTHER" id="PTHR43439">
    <property type="entry name" value="PHENYLACETATE-COENZYME A LIGASE"/>
    <property type="match status" value="1"/>
</dbReference>
<dbReference type="PANTHER" id="PTHR43439:SF1">
    <property type="entry name" value="PHENYLACETATE-COENZYME A LIGASE"/>
    <property type="match status" value="1"/>
</dbReference>
<dbReference type="Pfam" id="PF00501">
    <property type="entry name" value="AMP-binding"/>
    <property type="match status" value="1"/>
</dbReference>
<dbReference type="Pfam" id="PF14535">
    <property type="entry name" value="AMP-binding_C_2"/>
    <property type="match status" value="1"/>
</dbReference>
<dbReference type="PIRSF" id="PIRSF006444">
    <property type="entry name" value="PaaK"/>
    <property type="match status" value="1"/>
</dbReference>
<dbReference type="SUPFAM" id="SSF56801">
    <property type="entry name" value="Acetyl-CoA synthetase-like"/>
    <property type="match status" value="1"/>
</dbReference>
<name>PAAK_AROEV</name>
<accession>Q9L9C1</accession>
<comment type="function">
    <text evidence="1 3">Catalyzes the activation of phenylacetic acid (PA) to phenylacetyl-CoA (PA-CoA). Involved in the phenylalanine metabolism.</text>
</comment>
<comment type="catalytic activity">
    <reaction evidence="1 3">
        <text>2-phenylacetate + ATP + CoA = phenylacetyl-CoA + AMP + diphosphate</text>
        <dbReference type="Rhea" id="RHEA:20956"/>
        <dbReference type="ChEBI" id="CHEBI:18401"/>
        <dbReference type="ChEBI" id="CHEBI:30616"/>
        <dbReference type="ChEBI" id="CHEBI:33019"/>
        <dbReference type="ChEBI" id="CHEBI:57287"/>
        <dbReference type="ChEBI" id="CHEBI:57390"/>
        <dbReference type="ChEBI" id="CHEBI:456215"/>
        <dbReference type="EC" id="6.2.1.30"/>
    </reaction>
</comment>
<comment type="activity regulation">
    <text>Inhibition of activity is observed in the presence of a 1 mM of the divalent cations zinc, copper, and nickel.</text>
</comment>
<comment type="biophysicochemical properties">
    <kinetics>
        <KM evidence="1 3">14 uM for PA (aerobically at 37 degrees Celsius)</KM>
        <KM evidence="1 3">45 uM for CoA (aerobically at 37 degrees Celsius)</KM>
        <KM evidence="1 3">60 uM for ATP (aerobically at 37 degrees Celsius)</KM>
    </kinetics>
    <phDependence>
        <text evidence="1 3">Optimum pH is between 8 and 8.5, with a dramatic drop of activity (55%) at pH 9. Less than 10% activity is observed a pH 6, and half the maximal activity is measured at pH 7.</text>
    </phDependence>
    <temperatureDependence>
        <text evidence="1 3">Optimum temperature is 37 degrees Celsius. The enzyme is extremely labile, and the activity is totally lost within 48 h at 4 degrees Celsius.</text>
    </temperatureDependence>
</comment>
<comment type="pathway">
    <text>Aromatic compound metabolism; phenylacetate degradation.</text>
</comment>
<comment type="subunit">
    <text evidence="1">Monomer.</text>
</comment>
<comment type="induction">
    <text evidence="1 2">Induced by phenylacetate, phenylacetaldehyde, 3-hydroxyphenylacetate, phenylalanine, phenylbutyric acid, DL-phenyllactate, phenylpyruvate, or 4-phenylbutyrate.</text>
</comment>
<comment type="similarity">
    <text evidence="4">Belongs to the phenylacetyl-CoA ligase family.</text>
</comment>
<reference key="1">
    <citation type="journal article" date="2000" name="J. Bacteriol.">
        <title>Biochemical and molecular characterization of phenylacetate-coenzyme A ligase, an enzyme catalyzing the first step in aerobic metabolism of phenylacetic acid in Azoarcus evansii.</title>
        <authorList>
            <person name="Mohamed M.E."/>
        </authorList>
    </citation>
    <scope>NUCLEOTIDE SEQUENCE [GENOMIC DNA]</scope>
    <scope>PROTEIN SEQUENCE OF 1-9</scope>
    <scope>FUNCTION AS A PHENYLACETATE-COENZYME A LIGASE</scope>
    <scope>CATALYTIC ACTIVITY</scope>
    <scope>SUBUNIT</scope>
    <scope>BIOPHYSICOCHEMICAL PROPERTIES</scope>
    <scope>INDUCTION</scope>
    <source>
        <strain>DSM 6898 / NBRC 107771 / KB740</strain>
    </source>
</reference>
<reference key="2">
    <citation type="journal article" date="2002" name="Mol. Genet. Genomics">
        <title>Molecular analysis of aerobic phenylacetate degradation in Azoarcus evansii.</title>
        <authorList>
            <person name="Rost R."/>
            <person name="Haas S."/>
            <person name="Hammer E."/>
            <person name="Herrmann H."/>
            <person name="Burchhardt G."/>
        </authorList>
    </citation>
    <scope>NUCLEOTIDE SEQUENCE [GENOMIC DNA]</scope>
    <scope>INDUCTION</scope>
    <source>
        <strain>DSM 6898 / NBRC 107771 / KB740</strain>
    </source>
</reference>
<reference key="3">
    <citation type="journal article" date="2002" name="Arch. Microbiol.">
        <title>Aerobic metabolism of phenylacetic acids in Azoarcus evansii.</title>
        <authorList>
            <person name="Mohamed M.E."/>
            <person name="Ismail W."/>
            <person name="Heider J."/>
            <person name="Fuchs G."/>
        </authorList>
    </citation>
    <scope>FUNCTION AS A PHENYLACETATE-COENZYME A LIGASE AND IN PHENYLACETATE CATABOLISM</scope>
    <scope>CATALYTIC ACTIVITY</scope>
    <scope>BIOPHYSICOCHEMICAL PROPERTIES</scope>
    <source>
        <strain>DSM 6898 / NBRC 107771 / KB740</strain>
    </source>
</reference>
<sequence>MPVKTPSPGDLEPIEKASQDELRALQLERLKWSVRHAYENVPHYRKAFDAKGVHPDDLKSLADLAKFPFTAKGDLRDNYPFGMFAVPREKVARVHASSGTTGKPTVVGYTLKDIDTWATVVARSIRASGGRAGDMVHIAYGYGLFTGGLGAHYGAEKLGCTVVPMSGGQTEKQIQLIQDFKPDIIMVTPSYMLTVLDEMERMGIDPHQTSLKVGIFGAEPWTQAMRAAMEARAGIDAVDIYGLSEVMGPGVANECIEAKDGPVIWEDHFYPEIIDPHTGEVLPDGSEGELVFTTLTKEAMPVIRYRTRDLTRLLPPTARSMRRMAKITGRSDDMLIIRGVNLFPTQVEELICKNPKLAPQYLLEVDKDGHMDTLTVKVEINPEANVGRHPEQKEALAKELQHDIKTFIGVSAKVHVCEPFAIERVTIGKAKRVVDRRPKE</sequence>